<evidence type="ECO:0000255" key="1">
    <source>
        <dbReference type="HAMAP-Rule" id="MF_00201"/>
    </source>
</evidence>
<feature type="chain" id="PRO_1000099393" description="DNA repair protein RecO">
    <location>
        <begin position="1"/>
        <end position="247"/>
    </location>
</feature>
<reference key="1">
    <citation type="journal article" date="2008" name="J. Bacteriol.">
        <title>Complete genome sequence of Neisseria gonorrhoeae NCCP11945.</title>
        <authorList>
            <person name="Chung G.T."/>
            <person name="Yoo J.S."/>
            <person name="Oh H.B."/>
            <person name="Lee Y.S."/>
            <person name="Cha S.H."/>
            <person name="Kim S.J."/>
            <person name="Yoo C.K."/>
        </authorList>
    </citation>
    <scope>NUCLEOTIDE SEQUENCE [LARGE SCALE GENOMIC DNA]</scope>
    <source>
        <strain>NCCP11945</strain>
    </source>
</reference>
<proteinExistence type="inferred from homology"/>
<organism>
    <name type="scientific">Neisseria gonorrhoeae (strain NCCP11945)</name>
    <dbReference type="NCBI Taxonomy" id="521006"/>
    <lineage>
        <taxon>Bacteria</taxon>
        <taxon>Pseudomonadati</taxon>
        <taxon>Pseudomonadota</taxon>
        <taxon>Betaproteobacteria</taxon>
        <taxon>Neisseriales</taxon>
        <taxon>Neisseriaceae</taxon>
        <taxon>Neisseria</taxon>
    </lineage>
</organism>
<comment type="function">
    <text evidence="1">Involved in DNA repair and RecF pathway recombination.</text>
</comment>
<comment type="similarity">
    <text evidence="1">Belongs to the RecO family.</text>
</comment>
<gene>
    <name evidence="1" type="primary">recO</name>
    <name type="ordered locus">NGK_1791</name>
</gene>
<dbReference type="EMBL" id="CP001050">
    <property type="protein sequence ID" value="ACF30432.1"/>
    <property type="molecule type" value="Genomic_DNA"/>
</dbReference>
<dbReference type="RefSeq" id="WP_003695555.1">
    <property type="nucleotide sequence ID" value="NC_011035.1"/>
</dbReference>
<dbReference type="SMR" id="B4RQ94"/>
<dbReference type="GeneID" id="66753709"/>
<dbReference type="KEGG" id="ngk:NGK_1791"/>
<dbReference type="HOGENOM" id="CLU_066645_0_1_4"/>
<dbReference type="Proteomes" id="UP000002564">
    <property type="component" value="Chromosome"/>
</dbReference>
<dbReference type="GO" id="GO:0043590">
    <property type="term" value="C:bacterial nucleoid"/>
    <property type="evidence" value="ECO:0007669"/>
    <property type="project" value="TreeGrafter"/>
</dbReference>
<dbReference type="GO" id="GO:0006310">
    <property type="term" value="P:DNA recombination"/>
    <property type="evidence" value="ECO:0007669"/>
    <property type="project" value="UniProtKB-UniRule"/>
</dbReference>
<dbReference type="GO" id="GO:0006302">
    <property type="term" value="P:double-strand break repair"/>
    <property type="evidence" value="ECO:0007669"/>
    <property type="project" value="TreeGrafter"/>
</dbReference>
<dbReference type="Gene3D" id="2.40.50.140">
    <property type="entry name" value="Nucleic acid-binding proteins"/>
    <property type="match status" value="1"/>
</dbReference>
<dbReference type="Gene3D" id="1.20.1440.120">
    <property type="entry name" value="Recombination protein O, C-terminal domain"/>
    <property type="match status" value="1"/>
</dbReference>
<dbReference type="HAMAP" id="MF_00201">
    <property type="entry name" value="RecO"/>
    <property type="match status" value="1"/>
</dbReference>
<dbReference type="InterPro" id="IPR037278">
    <property type="entry name" value="ARFGAP/RecO"/>
</dbReference>
<dbReference type="InterPro" id="IPR022572">
    <property type="entry name" value="DNA_rep/recomb_RecO_N"/>
</dbReference>
<dbReference type="InterPro" id="IPR012340">
    <property type="entry name" value="NA-bd_OB-fold"/>
</dbReference>
<dbReference type="InterPro" id="IPR003717">
    <property type="entry name" value="RecO"/>
</dbReference>
<dbReference type="InterPro" id="IPR042242">
    <property type="entry name" value="RecO_C"/>
</dbReference>
<dbReference type="NCBIfam" id="TIGR00613">
    <property type="entry name" value="reco"/>
    <property type="match status" value="1"/>
</dbReference>
<dbReference type="PANTHER" id="PTHR33991">
    <property type="entry name" value="DNA REPAIR PROTEIN RECO"/>
    <property type="match status" value="1"/>
</dbReference>
<dbReference type="PANTHER" id="PTHR33991:SF1">
    <property type="entry name" value="DNA REPAIR PROTEIN RECO"/>
    <property type="match status" value="1"/>
</dbReference>
<dbReference type="Pfam" id="PF02565">
    <property type="entry name" value="RecO_C"/>
    <property type="match status" value="1"/>
</dbReference>
<dbReference type="Pfam" id="PF11967">
    <property type="entry name" value="RecO_N"/>
    <property type="match status" value="1"/>
</dbReference>
<dbReference type="SUPFAM" id="SSF57863">
    <property type="entry name" value="ArfGap/RecO-like zinc finger"/>
    <property type="match status" value="1"/>
</dbReference>
<dbReference type="SUPFAM" id="SSF50249">
    <property type="entry name" value="Nucleic acid-binding proteins"/>
    <property type="match status" value="1"/>
</dbReference>
<accession>B4RQ94</accession>
<keyword id="KW-0227">DNA damage</keyword>
<keyword id="KW-0233">DNA recombination</keyword>
<keyword id="KW-0234">DNA repair</keyword>
<protein>
    <recommendedName>
        <fullName evidence="1">DNA repair protein RecO</fullName>
    </recommendedName>
    <alternativeName>
        <fullName evidence="1">Recombination protein O</fullName>
    </alternativeName>
</protein>
<name>RECO_NEIG2</name>
<sequence>MSEYRVNHEPVFMLASSPWRESSLRVEAFSRRYGRVALLARSARKRQSELRGVLVPFVPASVSWYGSQELKTLHRAEWMGGWRQPQGRALFSGLYVNELVLKLTAREDPMSELYDALAKVMEAVCREANHIADLRRFEWKLLNALGVAPDLHADGTGGDILADKTYRLMPEEAVMPVCRDTGALSHEAGAIVEGQSLIDLREGSFRTAESLQQALKITRLLIGTLLPEGLKSRQVLEQIRQFDRNTA</sequence>